<dbReference type="EC" id="2.8.1.4" evidence="1"/>
<dbReference type="EMBL" id="AE004091">
    <property type="protein sequence ID" value="AAG08503.1"/>
    <property type="molecule type" value="Genomic_DNA"/>
</dbReference>
<dbReference type="PIR" id="F83005">
    <property type="entry name" value="F83005"/>
</dbReference>
<dbReference type="RefSeq" id="NP_253805.1">
    <property type="nucleotide sequence ID" value="NC_002516.2"/>
</dbReference>
<dbReference type="RefSeq" id="WP_003096011.1">
    <property type="nucleotide sequence ID" value="NZ_QZGE01000002.1"/>
</dbReference>
<dbReference type="SMR" id="Q9HU66"/>
<dbReference type="FunCoup" id="Q9HU66">
    <property type="interactions" value="265"/>
</dbReference>
<dbReference type="STRING" id="208964.PA5118"/>
<dbReference type="PaxDb" id="208964-PA5118"/>
<dbReference type="GeneID" id="877687"/>
<dbReference type="KEGG" id="pae:PA5118"/>
<dbReference type="PATRIC" id="fig|208964.12.peg.5363"/>
<dbReference type="PseudoCAP" id="PA5118"/>
<dbReference type="HOGENOM" id="CLU_037952_4_1_6"/>
<dbReference type="InParanoid" id="Q9HU66"/>
<dbReference type="OrthoDB" id="9773948at2"/>
<dbReference type="PhylomeDB" id="Q9HU66"/>
<dbReference type="BioCyc" id="PAER208964:G1FZ6-5233-MONOMER"/>
<dbReference type="UniPathway" id="UPA00060"/>
<dbReference type="Proteomes" id="UP000002438">
    <property type="component" value="Chromosome"/>
</dbReference>
<dbReference type="GO" id="GO:0005829">
    <property type="term" value="C:cytosol"/>
    <property type="evidence" value="ECO:0000318"/>
    <property type="project" value="GO_Central"/>
</dbReference>
<dbReference type="GO" id="GO:0005524">
    <property type="term" value="F:ATP binding"/>
    <property type="evidence" value="ECO:0007669"/>
    <property type="project" value="UniProtKB-UniRule"/>
</dbReference>
<dbReference type="GO" id="GO:0004810">
    <property type="term" value="F:CCA tRNA nucleotidyltransferase activity"/>
    <property type="evidence" value="ECO:0007669"/>
    <property type="project" value="InterPro"/>
</dbReference>
<dbReference type="GO" id="GO:0000049">
    <property type="term" value="F:tRNA binding"/>
    <property type="evidence" value="ECO:0007669"/>
    <property type="project" value="UniProtKB-UniRule"/>
</dbReference>
<dbReference type="GO" id="GO:0140741">
    <property type="term" value="F:tRNA-uracil-4 sulfurtransferase activity"/>
    <property type="evidence" value="ECO:0007669"/>
    <property type="project" value="UniProtKB-EC"/>
</dbReference>
<dbReference type="GO" id="GO:0009228">
    <property type="term" value="P:thiamine biosynthetic process"/>
    <property type="evidence" value="ECO:0007669"/>
    <property type="project" value="UniProtKB-KW"/>
</dbReference>
<dbReference type="GO" id="GO:0009229">
    <property type="term" value="P:thiamine diphosphate biosynthetic process"/>
    <property type="evidence" value="ECO:0007669"/>
    <property type="project" value="UniProtKB-UniRule"/>
</dbReference>
<dbReference type="GO" id="GO:0052837">
    <property type="term" value="P:thiazole biosynthetic process"/>
    <property type="evidence" value="ECO:0000314"/>
    <property type="project" value="PseudoCAP"/>
</dbReference>
<dbReference type="GO" id="GO:0002937">
    <property type="term" value="P:tRNA 4-thiouridine biosynthesis"/>
    <property type="evidence" value="ECO:0000318"/>
    <property type="project" value="GO_Central"/>
</dbReference>
<dbReference type="CDD" id="cd01712">
    <property type="entry name" value="PPase_ThiI"/>
    <property type="match status" value="1"/>
</dbReference>
<dbReference type="CDD" id="cd11716">
    <property type="entry name" value="THUMP_ThiI"/>
    <property type="match status" value="1"/>
</dbReference>
<dbReference type="FunFam" id="3.40.50.620:FF:000029">
    <property type="entry name" value="tRNA sulfurtransferase"/>
    <property type="match status" value="1"/>
</dbReference>
<dbReference type="Gene3D" id="3.30.2130.30">
    <property type="match status" value="1"/>
</dbReference>
<dbReference type="Gene3D" id="3.40.50.620">
    <property type="entry name" value="HUPs"/>
    <property type="match status" value="1"/>
</dbReference>
<dbReference type="Gene3D" id="3.40.250.10">
    <property type="entry name" value="Rhodanese-like domain"/>
    <property type="match status" value="1"/>
</dbReference>
<dbReference type="HAMAP" id="MF_00021">
    <property type="entry name" value="ThiI"/>
    <property type="match status" value="1"/>
</dbReference>
<dbReference type="InterPro" id="IPR001763">
    <property type="entry name" value="Rhodanese-like_dom"/>
</dbReference>
<dbReference type="InterPro" id="IPR036873">
    <property type="entry name" value="Rhodanese-like_dom_sf"/>
</dbReference>
<dbReference type="InterPro" id="IPR014729">
    <property type="entry name" value="Rossmann-like_a/b/a_fold"/>
</dbReference>
<dbReference type="InterPro" id="IPR020536">
    <property type="entry name" value="ThiI_AANH"/>
</dbReference>
<dbReference type="InterPro" id="IPR054173">
    <property type="entry name" value="ThiI_fer"/>
</dbReference>
<dbReference type="InterPro" id="IPR049961">
    <property type="entry name" value="ThiI_N"/>
</dbReference>
<dbReference type="InterPro" id="IPR026340">
    <property type="entry name" value="THII_Thiazole_biosynth_dom"/>
</dbReference>
<dbReference type="InterPro" id="IPR004114">
    <property type="entry name" value="THUMP_dom"/>
</dbReference>
<dbReference type="InterPro" id="IPR049962">
    <property type="entry name" value="THUMP_ThiI"/>
</dbReference>
<dbReference type="InterPro" id="IPR003720">
    <property type="entry name" value="tRNA_STrfase"/>
</dbReference>
<dbReference type="InterPro" id="IPR050102">
    <property type="entry name" value="tRNA_sulfurtransferase_ThiI"/>
</dbReference>
<dbReference type="NCBIfam" id="TIGR04271">
    <property type="entry name" value="ThiI_C_thiazole"/>
    <property type="match status" value="1"/>
</dbReference>
<dbReference type="NCBIfam" id="TIGR00342">
    <property type="entry name" value="tRNA uracil 4-sulfurtransferase ThiI"/>
    <property type="match status" value="1"/>
</dbReference>
<dbReference type="PANTHER" id="PTHR43209">
    <property type="entry name" value="TRNA SULFURTRANSFERASE"/>
    <property type="match status" value="1"/>
</dbReference>
<dbReference type="PANTHER" id="PTHR43209:SF1">
    <property type="entry name" value="TRNA SULFURTRANSFERASE"/>
    <property type="match status" value="1"/>
</dbReference>
<dbReference type="Pfam" id="PF02568">
    <property type="entry name" value="ThiI"/>
    <property type="match status" value="1"/>
</dbReference>
<dbReference type="Pfam" id="PF22025">
    <property type="entry name" value="ThiI_fer"/>
    <property type="match status" value="1"/>
</dbReference>
<dbReference type="Pfam" id="PF02926">
    <property type="entry name" value="THUMP"/>
    <property type="match status" value="1"/>
</dbReference>
<dbReference type="SMART" id="SM00981">
    <property type="entry name" value="THUMP"/>
    <property type="match status" value="1"/>
</dbReference>
<dbReference type="SUPFAM" id="SSF52402">
    <property type="entry name" value="Adenine nucleotide alpha hydrolases-like"/>
    <property type="match status" value="1"/>
</dbReference>
<dbReference type="SUPFAM" id="SSF52821">
    <property type="entry name" value="Rhodanese/Cell cycle control phosphatase"/>
    <property type="match status" value="1"/>
</dbReference>
<dbReference type="SUPFAM" id="SSF143437">
    <property type="entry name" value="THUMP domain-like"/>
    <property type="match status" value="1"/>
</dbReference>
<dbReference type="PROSITE" id="PS50206">
    <property type="entry name" value="RHODANESE_3"/>
    <property type="match status" value="1"/>
</dbReference>
<dbReference type="PROSITE" id="PS51165">
    <property type="entry name" value="THUMP"/>
    <property type="match status" value="1"/>
</dbReference>
<reference key="1">
    <citation type="journal article" date="2000" name="Nature">
        <title>Complete genome sequence of Pseudomonas aeruginosa PAO1, an opportunistic pathogen.</title>
        <authorList>
            <person name="Stover C.K."/>
            <person name="Pham X.-Q.T."/>
            <person name="Erwin A.L."/>
            <person name="Mizoguchi S.D."/>
            <person name="Warrener P."/>
            <person name="Hickey M.J."/>
            <person name="Brinkman F.S.L."/>
            <person name="Hufnagle W.O."/>
            <person name="Kowalik D.J."/>
            <person name="Lagrou M."/>
            <person name="Garber R.L."/>
            <person name="Goltry L."/>
            <person name="Tolentino E."/>
            <person name="Westbrock-Wadman S."/>
            <person name="Yuan Y."/>
            <person name="Brody L.L."/>
            <person name="Coulter S.N."/>
            <person name="Folger K.R."/>
            <person name="Kas A."/>
            <person name="Larbig K."/>
            <person name="Lim R.M."/>
            <person name="Smith K.A."/>
            <person name="Spencer D.H."/>
            <person name="Wong G.K.-S."/>
            <person name="Wu Z."/>
            <person name="Paulsen I.T."/>
            <person name="Reizer J."/>
            <person name="Saier M.H. Jr."/>
            <person name="Hancock R.E.W."/>
            <person name="Lory S."/>
            <person name="Olson M.V."/>
        </authorList>
    </citation>
    <scope>NUCLEOTIDE SEQUENCE [LARGE SCALE GENOMIC DNA]</scope>
    <source>
        <strain>ATCC 15692 / DSM 22644 / CIP 104116 / JCM 14847 / LMG 12228 / 1C / PRS 101 / PAO1</strain>
    </source>
</reference>
<protein>
    <recommendedName>
        <fullName evidence="1">tRNA sulfurtransferase</fullName>
        <ecNumber evidence="1">2.8.1.4</ecNumber>
    </recommendedName>
    <alternativeName>
        <fullName evidence="1">Sulfur carrier protein ThiS sulfurtransferase</fullName>
    </alternativeName>
    <alternativeName>
        <fullName evidence="1">Thiamine biosynthesis protein ThiI</fullName>
    </alternativeName>
    <alternativeName>
        <fullName evidence="1">tRNA 4-thiouridine synthase</fullName>
    </alternativeName>
</protein>
<gene>
    <name evidence="1" type="primary">thiI</name>
    <name type="ordered locus">PA5118</name>
</gene>
<name>THII_PSEAE</name>
<accession>Q9HU66</accession>
<sequence length="484" mass="54849">MKLIVKTFQEITIKSRPVRKRFIRQLAKNIRAVLRDLDPELKVEGEWDNLEVETAVVDAKARREMIERLTCTPGIGHFLEVHEYPLGDFDDILAKCKAHFGDQLAGKTFAVRCKRAGKHAFTSMEVERYVGSGLRRECGAAGIDLKQPEVEVRMEIRLDRLFVIHRQHPGLGGYPLGALEQVLVLMSGGFDSTVAAYQMMRRGMISHFVFFNLGGRAHELGVMEVAHYLWEKYGRSQRVLFVSVPFEEVVGEILTKVDDSYMGVTLKRMMLRAASRVAERLELDALVTGEAISQVSSQTLPNLSVIDRVTDTLVLRPLIVSHKQDIIDTARQIGTAEFARHMPEYCGVISVNPTTQAKPYRVEHEESKFDMAVLERALERATQRTVDRVIDELGQDLQVEEVGEVLPGQIVIDIRHPDAQEDEPLALEGVEVQALPFYAINSRFKELDANRQYLLYCDKGVMSRLHAHHLLNEGHTNVRVYRPA</sequence>
<keyword id="KW-0067">ATP-binding</keyword>
<keyword id="KW-0963">Cytoplasm</keyword>
<keyword id="KW-1015">Disulfide bond</keyword>
<keyword id="KW-0547">Nucleotide-binding</keyword>
<keyword id="KW-0676">Redox-active center</keyword>
<keyword id="KW-1185">Reference proteome</keyword>
<keyword id="KW-0694">RNA-binding</keyword>
<keyword id="KW-0784">Thiamine biosynthesis</keyword>
<keyword id="KW-0808">Transferase</keyword>
<keyword id="KW-0820">tRNA-binding</keyword>
<evidence type="ECO:0000255" key="1">
    <source>
        <dbReference type="HAMAP-Rule" id="MF_00021"/>
    </source>
</evidence>
<comment type="function">
    <text evidence="1">Catalyzes the ATP-dependent transfer of a sulfur to tRNA to produce 4-thiouridine in position 8 of tRNAs, which functions as a near-UV photosensor. Also catalyzes the transfer of sulfur to the sulfur carrier protein ThiS, forming ThiS-thiocarboxylate. This is a step in the synthesis of thiazole, in the thiamine biosynthesis pathway. The sulfur is donated as persulfide by IscS.</text>
</comment>
<comment type="catalytic activity">
    <reaction evidence="1">
        <text>[ThiI sulfur-carrier protein]-S-sulfanyl-L-cysteine + a uridine in tRNA + 2 reduced [2Fe-2S]-[ferredoxin] + ATP + H(+) = [ThiI sulfur-carrier protein]-L-cysteine + a 4-thiouridine in tRNA + 2 oxidized [2Fe-2S]-[ferredoxin] + AMP + diphosphate</text>
        <dbReference type="Rhea" id="RHEA:24176"/>
        <dbReference type="Rhea" id="RHEA-COMP:10000"/>
        <dbReference type="Rhea" id="RHEA-COMP:10001"/>
        <dbReference type="Rhea" id="RHEA-COMP:13337"/>
        <dbReference type="Rhea" id="RHEA-COMP:13338"/>
        <dbReference type="Rhea" id="RHEA-COMP:13339"/>
        <dbReference type="Rhea" id="RHEA-COMP:13340"/>
        <dbReference type="ChEBI" id="CHEBI:15378"/>
        <dbReference type="ChEBI" id="CHEBI:29950"/>
        <dbReference type="ChEBI" id="CHEBI:30616"/>
        <dbReference type="ChEBI" id="CHEBI:33019"/>
        <dbReference type="ChEBI" id="CHEBI:33737"/>
        <dbReference type="ChEBI" id="CHEBI:33738"/>
        <dbReference type="ChEBI" id="CHEBI:61963"/>
        <dbReference type="ChEBI" id="CHEBI:65315"/>
        <dbReference type="ChEBI" id="CHEBI:136798"/>
        <dbReference type="ChEBI" id="CHEBI:456215"/>
        <dbReference type="EC" id="2.8.1.4"/>
    </reaction>
</comment>
<comment type="catalytic activity">
    <reaction evidence="1">
        <text>[ThiS sulfur-carrier protein]-C-terminal Gly-Gly-AMP + S-sulfanyl-L-cysteinyl-[cysteine desulfurase] + AH2 = [ThiS sulfur-carrier protein]-C-terminal-Gly-aminoethanethioate + L-cysteinyl-[cysteine desulfurase] + A + AMP + 2 H(+)</text>
        <dbReference type="Rhea" id="RHEA:43340"/>
        <dbReference type="Rhea" id="RHEA-COMP:12157"/>
        <dbReference type="Rhea" id="RHEA-COMP:12158"/>
        <dbReference type="Rhea" id="RHEA-COMP:12910"/>
        <dbReference type="Rhea" id="RHEA-COMP:19908"/>
        <dbReference type="ChEBI" id="CHEBI:13193"/>
        <dbReference type="ChEBI" id="CHEBI:15378"/>
        <dbReference type="ChEBI" id="CHEBI:17499"/>
        <dbReference type="ChEBI" id="CHEBI:29950"/>
        <dbReference type="ChEBI" id="CHEBI:61963"/>
        <dbReference type="ChEBI" id="CHEBI:90618"/>
        <dbReference type="ChEBI" id="CHEBI:232372"/>
        <dbReference type="ChEBI" id="CHEBI:456215"/>
    </reaction>
</comment>
<comment type="pathway">
    <text evidence="1">Cofactor biosynthesis; thiamine diphosphate biosynthesis.</text>
</comment>
<comment type="subcellular location">
    <subcellularLocation>
        <location evidence="1">Cytoplasm</location>
    </subcellularLocation>
</comment>
<comment type="similarity">
    <text evidence="1">Belongs to the ThiI family.</text>
</comment>
<proteinExistence type="inferred from homology"/>
<feature type="chain" id="PRO_0000154856" description="tRNA sulfurtransferase">
    <location>
        <begin position="1"/>
        <end position="484"/>
    </location>
</feature>
<feature type="domain" description="THUMP" evidence="1">
    <location>
        <begin position="63"/>
        <end position="167"/>
    </location>
</feature>
<feature type="domain" description="Rhodanese" evidence="1">
    <location>
        <begin position="405"/>
        <end position="483"/>
    </location>
</feature>
<feature type="active site" description="Cysteine persulfide intermediate" evidence="1">
    <location>
        <position position="457"/>
    </location>
</feature>
<feature type="binding site" evidence="1">
    <location>
        <begin position="185"/>
        <end position="186"/>
    </location>
    <ligand>
        <name>ATP</name>
        <dbReference type="ChEBI" id="CHEBI:30616"/>
    </ligand>
</feature>
<feature type="binding site" evidence="1">
    <location>
        <position position="267"/>
    </location>
    <ligand>
        <name>ATP</name>
        <dbReference type="ChEBI" id="CHEBI:30616"/>
    </ligand>
</feature>
<feature type="binding site" evidence="1">
    <location>
        <position position="289"/>
    </location>
    <ligand>
        <name>ATP</name>
        <dbReference type="ChEBI" id="CHEBI:30616"/>
    </ligand>
</feature>
<feature type="binding site" evidence="1">
    <location>
        <position position="298"/>
    </location>
    <ligand>
        <name>ATP</name>
        <dbReference type="ChEBI" id="CHEBI:30616"/>
    </ligand>
</feature>
<feature type="disulfide bond" description="Redox-active" evidence="1">
    <location>
        <begin position="346"/>
        <end position="457"/>
    </location>
</feature>
<organism>
    <name type="scientific">Pseudomonas aeruginosa (strain ATCC 15692 / DSM 22644 / CIP 104116 / JCM 14847 / LMG 12228 / 1C / PRS 101 / PAO1)</name>
    <dbReference type="NCBI Taxonomy" id="208964"/>
    <lineage>
        <taxon>Bacteria</taxon>
        <taxon>Pseudomonadati</taxon>
        <taxon>Pseudomonadota</taxon>
        <taxon>Gammaproteobacteria</taxon>
        <taxon>Pseudomonadales</taxon>
        <taxon>Pseudomonadaceae</taxon>
        <taxon>Pseudomonas</taxon>
    </lineage>
</organism>